<proteinExistence type="inferred from homology"/>
<feature type="chain" id="PRO_1000137913" description="Undecaprenyl-phosphate 4-deoxy-4-formamido-L-arabinose transferase">
    <location>
        <begin position="1"/>
        <end position="322"/>
    </location>
</feature>
<feature type="topological domain" description="Cytoplasmic" evidence="1">
    <location>
        <begin position="1"/>
        <end position="235"/>
    </location>
</feature>
<feature type="transmembrane region" description="Helical" evidence="1">
    <location>
        <begin position="236"/>
        <end position="256"/>
    </location>
</feature>
<feature type="topological domain" description="Periplasmic" evidence="1">
    <location>
        <begin position="257"/>
        <end position="269"/>
    </location>
</feature>
<feature type="transmembrane region" description="Helical" evidence="1">
    <location>
        <begin position="270"/>
        <end position="290"/>
    </location>
</feature>
<feature type="topological domain" description="Cytoplasmic" evidence="1">
    <location>
        <begin position="291"/>
        <end position="322"/>
    </location>
</feature>
<evidence type="ECO:0000255" key="1">
    <source>
        <dbReference type="HAMAP-Rule" id="MF_01164"/>
    </source>
</evidence>
<dbReference type="EC" id="2.4.2.53" evidence="1"/>
<dbReference type="EMBL" id="AP009240">
    <property type="protein sequence ID" value="BAG78037.1"/>
    <property type="molecule type" value="Genomic_DNA"/>
</dbReference>
<dbReference type="RefSeq" id="WP_000461657.1">
    <property type="nucleotide sequence ID" value="NC_011415.1"/>
</dbReference>
<dbReference type="SMR" id="B6I7J7"/>
<dbReference type="CAZy" id="GT2">
    <property type="family name" value="Glycosyltransferase Family 2"/>
</dbReference>
<dbReference type="GeneID" id="93774920"/>
<dbReference type="KEGG" id="ecy:ECSE_2513"/>
<dbReference type="HOGENOM" id="CLU_033536_0_0_6"/>
<dbReference type="UniPathway" id="UPA00030"/>
<dbReference type="UniPathway" id="UPA00036">
    <property type="reaction ID" value="UER00495"/>
</dbReference>
<dbReference type="Proteomes" id="UP000008199">
    <property type="component" value="Chromosome"/>
</dbReference>
<dbReference type="GO" id="GO:0005886">
    <property type="term" value="C:plasma membrane"/>
    <property type="evidence" value="ECO:0007669"/>
    <property type="project" value="UniProtKB-SubCell"/>
</dbReference>
<dbReference type="GO" id="GO:0016780">
    <property type="term" value="F:phosphotransferase activity, for other substituted phosphate groups"/>
    <property type="evidence" value="ECO:0007669"/>
    <property type="project" value="UniProtKB-UniRule"/>
</dbReference>
<dbReference type="GO" id="GO:0099621">
    <property type="term" value="F:undecaprenyl-phosphate 4-deoxy-4-formamido-L-arabinose transferase activity"/>
    <property type="evidence" value="ECO:0007669"/>
    <property type="project" value="UniProtKB-EC"/>
</dbReference>
<dbReference type="GO" id="GO:0036108">
    <property type="term" value="P:4-amino-4-deoxy-alpha-L-arabinopyranosyl undecaprenyl phosphate biosynthetic process"/>
    <property type="evidence" value="ECO:0007669"/>
    <property type="project" value="UniProtKB-UniRule"/>
</dbReference>
<dbReference type="GO" id="GO:0009245">
    <property type="term" value="P:lipid A biosynthetic process"/>
    <property type="evidence" value="ECO:0007669"/>
    <property type="project" value="UniProtKB-UniRule"/>
</dbReference>
<dbReference type="GO" id="GO:0009103">
    <property type="term" value="P:lipopolysaccharide biosynthetic process"/>
    <property type="evidence" value="ECO:0007669"/>
    <property type="project" value="UniProtKB-UniRule"/>
</dbReference>
<dbReference type="GO" id="GO:0046677">
    <property type="term" value="P:response to antibiotic"/>
    <property type="evidence" value="ECO:0007669"/>
    <property type="project" value="UniProtKB-KW"/>
</dbReference>
<dbReference type="CDD" id="cd04187">
    <property type="entry name" value="DPM1_like_bac"/>
    <property type="match status" value="1"/>
</dbReference>
<dbReference type="FunFam" id="3.90.550.10:FF:000019">
    <property type="entry name" value="Undecaprenyl-phosphate 4-deoxy-4-formamido-L-arabinose transferase"/>
    <property type="match status" value="1"/>
</dbReference>
<dbReference type="Gene3D" id="3.90.550.10">
    <property type="entry name" value="Spore Coat Polysaccharide Biosynthesis Protein SpsA, Chain A"/>
    <property type="match status" value="1"/>
</dbReference>
<dbReference type="HAMAP" id="MF_01164">
    <property type="entry name" value="ArnC_transfer"/>
    <property type="match status" value="1"/>
</dbReference>
<dbReference type="InterPro" id="IPR022857">
    <property type="entry name" value="ArnC_tfrase"/>
</dbReference>
<dbReference type="InterPro" id="IPR001173">
    <property type="entry name" value="Glyco_trans_2-like"/>
</dbReference>
<dbReference type="InterPro" id="IPR050256">
    <property type="entry name" value="Glycosyltransferase_2"/>
</dbReference>
<dbReference type="InterPro" id="IPR029044">
    <property type="entry name" value="Nucleotide-diphossugar_trans"/>
</dbReference>
<dbReference type="NCBIfam" id="NF007986">
    <property type="entry name" value="PRK10714.1"/>
    <property type="match status" value="1"/>
</dbReference>
<dbReference type="PANTHER" id="PTHR48090:SF3">
    <property type="entry name" value="UNDECAPRENYL-PHOSPHATE 4-DEOXY-4-FORMAMIDO-L-ARABINOSE TRANSFERASE"/>
    <property type="match status" value="1"/>
</dbReference>
<dbReference type="PANTHER" id="PTHR48090">
    <property type="entry name" value="UNDECAPRENYL-PHOSPHATE 4-DEOXY-4-FORMAMIDO-L-ARABINOSE TRANSFERASE-RELATED"/>
    <property type="match status" value="1"/>
</dbReference>
<dbReference type="Pfam" id="PF00535">
    <property type="entry name" value="Glycos_transf_2"/>
    <property type="match status" value="1"/>
</dbReference>
<dbReference type="SUPFAM" id="SSF53448">
    <property type="entry name" value="Nucleotide-diphospho-sugar transferases"/>
    <property type="match status" value="1"/>
</dbReference>
<gene>
    <name evidence="1" type="primary">arnC</name>
    <name type="ordered locus">ECSE_2513</name>
</gene>
<reference key="1">
    <citation type="journal article" date="2008" name="DNA Res.">
        <title>Complete genome sequence and comparative analysis of the wild-type commensal Escherichia coli strain SE11 isolated from a healthy adult.</title>
        <authorList>
            <person name="Oshima K."/>
            <person name="Toh H."/>
            <person name="Ogura Y."/>
            <person name="Sasamoto H."/>
            <person name="Morita H."/>
            <person name="Park S.-H."/>
            <person name="Ooka T."/>
            <person name="Iyoda S."/>
            <person name="Taylor T.D."/>
            <person name="Hayashi T."/>
            <person name="Itoh K."/>
            <person name="Hattori M."/>
        </authorList>
    </citation>
    <scope>NUCLEOTIDE SEQUENCE [LARGE SCALE GENOMIC DNA]</scope>
    <source>
        <strain>SE11</strain>
    </source>
</reference>
<sequence>MFEIHPVKKVSVVIPVYNEQESLPELIRRTTTACESLGKEYEILLIDDGSSDNSAHMLVEASQAENSHIVSILLNRNYGQHSAIMAGFSHVTGDLIITLDADLQNPPEEIPRLVAKADEGYDVVGTVRQNRQDSWFRKTASKMINRLIQRTTGKAMGDYGCMLRAYRRHIVDAMLHCHERSTFIPILANIFARRAIEIPVHHAEREFGESKYSFMRLINLMYDLVTCLTTTPLRMLSLLGSIIAIGGFSIAVLLVILRLTFGPQWAAEGVFMLFAVLFTFIGAQFIGMGLLGEYIGRIYTDVRARPRYFVQQVIRPSSKENE</sequence>
<keyword id="KW-0046">Antibiotic resistance</keyword>
<keyword id="KW-0997">Cell inner membrane</keyword>
<keyword id="KW-1003">Cell membrane</keyword>
<keyword id="KW-0328">Glycosyltransferase</keyword>
<keyword id="KW-0441">Lipid A biosynthesis</keyword>
<keyword id="KW-0444">Lipid biosynthesis</keyword>
<keyword id="KW-0443">Lipid metabolism</keyword>
<keyword id="KW-0448">Lipopolysaccharide biosynthesis</keyword>
<keyword id="KW-0472">Membrane</keyword>
<keyword id="KW-0808">Transferase</keyword>
<keyword id="KW-0812">Transmembrane</keyword>
<keyword id="KW-1133">Transmembrane helix</keyword>
<protein>
    <recommendedName>
        <fullName evidence="1">Undecaprenyl-phosphate 4-deoxy-4-formamido-L-arabinose transferase</fullName>
        <ecNumber evidence="1">2.4.2.53</ecNumber>
    </recommendedName>
    <alternativeName>
        <fullName evidence="1">Undecaprenyl-phosphate Ara4FN transferase</fullName>
        <shortName evidence="1">Ara4FN transferase</shortName>
    </alternativeName>
</protein>
<name>ARNC_ECOSE</name>
<comment type="function">
    <text evidence="1">Catalyzes the transfer of 4-deoxy-4-formamido-L-arabinose from UDP to undecaprenyl phosphate. The modified arabinose is attached to lipid A and is required for resistance to polymyxin and cationic antimicrobial peptides.</text>
</comment>
<comment type="catalytic activity">
    <reaction evidence="1">
        <text>UDP-4-deoxy-4-formamido-beta-L-arabinose + di-trans,octa-cis-undecaprenyl phosphate = 4-deoxy-4-formamido-alpha-L-arabinopyranosyl di-trans,octa-cis-undecaprenyl phosphate + UDP</text>
        <dbReference type="Rhea" id="RHEA:27722"/>
        <dbReference type="ChEBI" id="CHEBI:58223"/>
        <dbReference type="ChEBI" id="CHEBI:58709"/>
        <dbReference type="ChEBI" id="CHEBI:58909"/>
        <dbReference type="ChEBI" id="CHEBI:60392"/>
        <dbReference type="EC" id="2.4.2.53"/>
    </reaction>
</comment>
<comment type="pathway">
    <text evidence="1">Glycolipid biosynthesis; 4-amino-4-deoxy-alpha-L-arabinose undecaprenyl phosphate biosynthesis; 4-amino-4-deoxy-alpha-L-arabinose undecaprenyl phosphate from UDP-4-deoxy-4-formamido-beta-L-arabinose and undecaprenyl phosphate: step 1/2.</text>
</comment>
<comment type="pathway">
    <text evidence="1">Bacterial outer membrane biogenesis; lipopolysaccharide biosynthesis.</text>
</comment>
<comment type="subcellular location">
    <subcellularLocation>
        <location evidence="1">Cell inner membrane</location>
        <topology evidence="1">Multi-pass membrane protein</topology>
    </subcellularLocation>
</comment>
<comment type="similarity">
    <text evidence="1">Belongs to the glycosyltransferase 2 family.</text>
</comment>
<organism>
    <name type="scientific">Escherichia coli (strain SE11)</name>
    <dbReference type="NCBI Taxonomy" id="409438"/>
    <lineage>
        <taxon>Bacteria</taxon>
        <taxon>Pseudomonadati</taxon>
        <taxon>Pseudomonadota</taxon>
        <taxon>Gammaproteobacteria</taxon>
        <taxon>Enterobacterales</taxon>
        <taxon>Enterobacteriaceae</taxon>
        <taxon>Escherichia</taxon>
    </lineage>
</organism>
<accession>B6I7J7</accession>